<proteinExistence type="inferred from homology"/>
<protein>
    <recommendedName>
        <fullName evidence="1">Membrane-bound lytic murein transglycosylase C</fullName>
        <ecNumber evidence="1">4.2.2.n1</ecNumber>
    </recommendedName>
    <alternativeName>
        <fullName evidence="1">Murein lyase C</fullName>
    </alternativeName>
</protein>
<sequence length="358" mass="40321">MKITLKKLLILAIVPFLYACSSDRANYDDVFAKDTHGLDLLTGQFSQNIDQIWGVNELLVASRKDYVKYNDSYYTRSHISFDEGMITIETLADVNRLHSAIVHTLLMGSDAKGIDLFASGDTPISSRPFLVGQVVNNFGQSITNVNVANNFATYLIQNKLQQRRLNNGRTVQFVSIQMIANHVNIRARKYLPFVRKASRQYGIDESLILGIMQTESSFNPYAISYANAIGLMQVVPHSAGRDIFKMKGRSGQPSKSYLFDPAKNVDAGTSYLWLLRNEYLAGIQNPTSMRYAMISAYNSGAGAVLRVFSDDPDEAIYIINRMQPEQVYRILTTGHPSAQARNYLVKVDKAQRSYRRVR</sequence>
<keyword id="KW-0998">Cell outer membrane</keyword>
<keyword id="KW-0961">Cell wall biogenesis/degradation</keyword>
<keyword id="KW-0449">Lipoprotein</keyword>
<keyword id="KW-0456">Lyase</keyword>
<keyword id="KW-0472">Membrane</keyword>
<keyword id="KW-0564">Palmitate</keyword>
<keyword id="KW-1185">Reference proteome</keyword>
<keyword id="KW-0732">Signal</keyword>
<name>MLTC_ACTSZ</name>
<dbReference type="EC" id="4.2.2.n1" evidence="1"/>
<dbReference type="EMBL" id="CP000746">
    <property type="protein sequence ID" value="ABR73917.1"/>
    <property type="molecule type" value="Genomic_DNA"/>
</dbReference>
<dbReference type="RefSeq" id="WP_012072297.1">
    <property type="nucleotide sequence ID" value="NC_009655.1"/>
</dbReference>
<dbReference type="SMR" id="A6VLS0"/>
<dbReference type="STRING" id="339671.Asuc_0542"/>
<dbReference type="CAZy" id="GH23">
    <property type="family name" value="Glycoside Hydrolase Family 23"/>
</dbReference>
<dbReference type="KEGG" id="asu:Asuc_0542"/>
<dbReference type="eggNOG" id="COG0741">
    <property type="taxonomic scope" value="Bacteria"/>
</dbReference>
<dbReference type="HOGENOM" id="CLU_044583_0_0_6"/>
<dbReference type="OrthoDB" id="5620293at2"/>
<dbReference type="Proteomes" id="UP000001114">
    <property type="component" value="Chromosome"/>
</dbReference>
<dbReference type="GO" id="GO:0009279">
    <property type="term" value="C:cell outer membrane"/>
    <property type="evidence" value="ECO:0007669"/>
    <property type="project" value="UniProtKB-SubCell"/>
</dbReference>
<dbReference type="GO" id="GO:0016798">
    <property type="term" value="F:hydrolase activity, acting on glycosyl bonds"/>
    <property type="evidence" value="ECO:0007669"/>
    <property type="project" value="InterPro"/>
</dbReference>
<dbReference type="GO" id="GO:0008933">
    <property type="term" value="F:peptidoglycan lytic transglycosylase activity"/>
    <property type="evidence" value="ECO:0007669"/>
    <property type="project" value="UniProtKB-UniRule"/>
</dbReference>
<dbReference type="GO" id="GO:0016998">
    <property type="term" value="P:cell wall macromolecule catabolic process"/>
    <property type="evidence" value="ECO:0007669"/>
    <property type="project" value="UniProtKB-UniRule"/>
</dbReference>
<dbReference type="GO" id="GO:0071555">
    <property type="term" value="P:cell wall organization"/>
    <property type="evidence" value="ECO:0007669"/>
    <property type="project" value="UniProtKB-KW"/>
</dbReference>
<dbReference type="GO" id="GO:0000270">
    <property type="term" value="P:peptidoglycan metabolic process"/>
    <property type="evidence" value="ECO:0007669"/>
    <property type="project" value="InterPro"/>
</dbReference>
<dbReference type="CDD" id="cd16893">
    <property type="entry name" value="LT_MltC_MltE"/>
    <property type="match status" value="1"/>
</dbReference>
<dbReference type="Gene3D" id="1.10.530.10">
    <property type="match status" value="1"/>
</dbReference>
<dbReference type="HAMAP" id="MF_01616">
    <property type="entry name" value="MltC"/>
    <property type="match status" value="1"/>
</dbReference>
<dbReference type="InterPro" id="IPR023346">
    <property type="entry name" value="Lysozyme-like_dom_sf"/>
</dbReference>
<dbReference type="InterPro" id="IPR023664">
    <property type="entry name" value="Murein_transglycosylaseC"/>
</dbReference>
<dbReference type="InterPro" id="IPR024570">
    <property type="entry name" value="Murein_transglycosylaseC_N"/>
</dbReference>
<dbReference type="InterPro" id="IPR000189">
    <property type="entry name" value="Transglyc_AS"/>
</dbReference>
<dbReference type="InterPro" id="IPR008258">
    <property type="entry name" value="Transglycosylase_SLT_dom_1"/>
</dbReference>
<dbReference type="NCBIfam" id="NF008670">
    <property type="entry name" value="PRK11671.1"/>
    <property type="match status" value="1"/>
</dbReference>
<dbReference type="PANTHER" id="PTHR37423:SF2">
    <property type="entry name" value="MEMBRANE-BOUND LYTIC MUREIN TRANSGLYCOSYLASE C"/>
    <property type="match status" value="1"/>
</dbReference>
<dbReference type="PANTHER" id="PTHR37423">
    <property type="entry name" value="SOLUBLE LYTIC MUREIN TRANSGLYCOSYLASE-RELATED"/>
    <property type="match status" value="1"/>
</dbReference>
<dbReference type="Pfam" id="PF11873">
    <property type="entry name" value="Mltc_N"/>
    <property type="match status" value="1"/>
</dbReference>
<dbReference type="Pfam" id="PF01464">
    <property type="entry name" value="SLT"/>
    <property type="match status" value="1"/>
</dbReference>
<dbReference type="SUPFAM" id="SSF53955">
    <property type="entry name" value="Lysozyme-like"/>
    <property type="match status" value="1"/>
</dbReference>
<dbReference type="PROSITE" id="PS51257">
    <property type="entry name" value="PROKAR_LIPOPROTEIN"/>
    <property type="match status" value="1"/>
</dbReference>
<dbReference type="PROSITE" id="PS00922">
    <property type="entry name" value="TRANSGLYCOSYLASE"/>
    <property type="match status" value="1"/>
</dbReference>
<evidence type="ECO:0000255" key="1">
    <source>
        <dbReference type="HAMAP-Rule" id="MF_01616"/>
    </source>
</evidence>
<comment type="function">
    <text evidence="1">Murein-degrading enzyme. May play a role in recycling of muropeptides during cell elongation and/or cell division.</text>
</comment>
<comment type="catalytic activity">
    <reaction evidence="1">
        <text>Exolytic cleavage of the (1-&gt;4)-beta-glycosidic linkage between N-acetylmuramic acid (MurNAc) and N-acetylglucosamine (GlcNAc) residues in peptidoglycan, from either the reducing or the non-reducing ends of the peptidoglycan chains, with concomitant formation of a 1,6-anhydrobond in the MurNAc residue.</text>
        <dbReference type="EC" id="4.2.2.n1"/>
    </reaction>
</comment>
<comment type="subcellular location">
    <subcellularLocation>
        <location evidence="1">Cell outer membrane</location>
        <topology evidence="1">Lipid-anchor</topology>
    </subcellularLocation>
</comment>
<comment type="similarity">
    <text evidence="1">Belongs to the transglycosylase Slt family.</text>
</comment>
<organism>
    <name type="scientific">Actinobacillus succinogenes (strain ATCC 55618 / DSM 22257 / CCUG 43843 / 130Z)</name>
    <dbReference type="NCBI Taxonomy" id="339671"/>
    <lineage>
        <taxon>Bacteria</taxon>
        <taxon>Pseudomonadati</taxon>
        <taxon>Pseudomonadota</taxon>
        <taxon>Gammaproteobacteria</taxon>
        <taxon>Pasteurellales</taxon>
        <taxon>Pasteurellaceae</taxon>
        <taxon>Actinobacillus</taxon>
    </lineage>
</organism>
<feature type="signal peptide" evidence="1">
    <location>
        <begin position="1"/>
        <end position="19"/>
    </location>
</feature>
<feature type="chain" id="PRO_5000258729" description="Membrane-bound lytic murein transglycosylase C">
    <location>
        <begin position="20"/>
        <end position="358"/>
    </location>
</feature>
<feature type="lipid moiety-binding region" description="N-palmitoyl cysteine" evidence="1">
    <location>
        <position position="20"/>
    </location>
</feature>
<feature type="lipid moiety-binding region" description="S-diacylglycerol cysteine" evidence="1">
    <location>
        <position position="20"/>
    </location>
</feature>
<reference key="1">
    <citation type="journal article" date="2010" name="BMC Genomics">
        <title>A genomic perspective on the potential of Actinobacillus succinogenes for industrial succinate production.</title>
        <authorList>
            <person name="McKinlay J.B."/>
            <person name="Laivenieks M."/>
            <person name="Schindler B.D."/>
            <person name="McKinlay A.A."/>
            <person name="Siddaramappa S."/>
            <person name="Challacombe J.F."/>
            <person name="Lowry S.R."/>
            <person name="Clum A."/>
            <person name="Lapidus A.L."/>
            <person name="Burkhart K.B."/>
            <person name="Harkins V."/>
            <person name="Vieille C."/>
        </authorList>
    </citation>
    <scope>NUCLEOTIDE SEQUENCE [LARGE SCALE GENOMIC DNA]</scope>
    <source>
        <strain>ATCC 55618 / DSM 22257 / CCUG 43843 / 130Z</strain>
    </source>
</reference>
<gene>
    <name evidence="1" type="primary">mltC</name>
    <name type="ordered locus">Asuc_0542</name>
</gene>
<accession>A6VLS0</accession>